<sequence length="421" mass="46588">MGNITKRGSRDLVADGATLVEESLATTLHSKLYEAIIKEDCNTIKTLLRNHPVNQPLTILANSTRYRLLSQQTQPIFPIHLAAEYRKPQSLLCLLQHGADPEVRDAQGFTTLHLMLLNWPASSTTWSKPSTQIQKILMDIQNNAVLCLCILCDHGAQVNARVDNSNKHSALHLAIIHGTYPVLSFLAQNGAQVNATNESSMTPLHMAADILNKNMIETLIAFGANVNCAISSTGNTALKLAVCTASSKVGRLLAAGVGCIRLLLNNGAQVNAQDHEGQTALHEACFGGREAIISLLLEFEANVNILTRNGESPIYMYLQRSSNIRDRSLLARLLYRTYPLRLSNKQGILPAGIMLPEYQLLRETLVKLSKKPLTLEAICKRSIRNVYGEKYKFHLEKLLPAKLWNSIYGIYDLTYLLKGEP</sequence>
<accession>Q9CQM6</accession>
<accession>Q80W77</accession>
<name>ANR61_MOUSE</name>
<dbReference type="EMBL" id="AK014929">
    <property type="protein sequence ID" value="BAB29624.1"/>
    <property type="molecule type" value="mRNA"/>
</dbReference>
<dbReference type="EMBL" id="AK017053">
    <property type="protein sequence ID" value="BAB30569.1"/>
    <property type="molecule type" value="mRNA"/>
</dbReference>
<dbReference type="EMBL" id="BC052346">
    <property type="protein sequence ID" value="AAH52346.1"/>
    <property type="molecule type" value="mRNA"/>
</dbReference>
<dbReference type="CCDS" id="CCDS39373.1">
    <molecule id="Q9CQM6-1"/>
</dbReference>
<dbReference type="CCDS" id="CCDS80460.1">
    <molecule id="Q9CQM6-2"/>
</dbReference>
<dbReference type="RefSeq" id="NP_001297701.1">
    <molecule id="Q9CQM6-2"/>
    <property type="nucleotide sequence ID" value="NM_001310772.1"/>
</dbReference>
<dbReference type="RefSeq" id="NP_080008.1">
    <molecule id="Q9CQM6-1"/>
    <property type="nucleotide sequence ID" value="NM_025732.4"/>
</dbReference>
<dbReference type="SMR" id="Q9CQM6"/>
<dbReference type="FunCoup" id="Q9CQM6">
    <property type="interactions" value="216"/>
</dbReference>
<dbReference type="STRING" id="10090.ENSMUSP00000106345"/>
<dbReference type="iPTMnet" id="Q9CQM6"/>
<dbReference type="PhosphoSitePlus" id="Q9CQM6"/>
<dbReference type="SwissPalm" id="Q9CQM6"/>
<dbReference type="PaxDb" id="10090-ENSMUSP00000106345"/>
<dbReference type="ProteomicsDB" id="282121">
    <molecule id="Q9CQM6-1"/>
</dbReference>
<dbReference type="ProteomicsDB" id="282122">
    <molecule id="Q9CQM6-2"/>
</dbReference>
<dbReference type="Antibodypedia" id="49311">
    <property type="antibodies" value="54 antibodies from 11 providers"/>
</dbReference>
<dbReference type="DNASU" id="66729"/>
<dbReference type="Ensembl" id="ENSMUST00000079624.12">
    <molecule id="Q9CQM6-2"/>
    <property type="protein sequence ID" value="ENSMUSP00000078571.6"/>
    <property type="gene ID" value="ENSMUSG00000029607.15"/>
</dbReference>
<dbReference type="Ensembl" id="ENSMUST00000110717.9">
    <molecule id="Q9CQM6-1"/>
    <property type="protein sequence ID" value="ENSMUSP00000106345.3"/>
    <property type="gene ID" value="ENSMUSG00000029607.15"/>
</dbReference>
<dbReference type="GeneID" id="66729"/>
<dbReference type="KEGG" id="mmu:66729"/>
<dbReference type="UCSC" id="uc009akv.1">
    <molecule id="Q9CQM6-1"/>
    <property type="organism name" value="mouse"/>
</dbReference>
<dbReference type="AGR" id="MGI:1913979"/>
<dbReference type="CTD" id="100310846"/>
<dbReference type="MGI" id="MGI:1913979">
    <property type="gene designation" value="Ankrd61"/>
</dbReference>
<dbReference type="VEuPathDB" id="HostDB:ENSMUSG00000029607"/>
<dbReference type="eggNOG" id="KOG4177">
    <property type="taxonomic scope" value="Eukaryota"/>
</dbReference>
<dbReference type="GeneTree" id="ENSGT00840000130004"/>
<dbReference type="HOGENOM" id="CLU_054056_0_0_1"/>
<dbReference type="InParanoid" id="Q9CQM6"/>
<dbReference type="OMA" id="AINESSM"/>
<dbReference type="OrthoDB" id="194358at2759"/>
<dbReference type="PhylomeDB" id="Q9CQM6"/>
<dbReference type="TreeFam" id="TF352214"/>
<dbReference type="BioGRID-ORCS" id="66729">
    <property type="hits" value="2 hits in 76 CRISPR screens"/>
</dbReference>
<dbReference type="PRO" id="PR:Q9CQM6"/>
<dbReference type="Proteomes" id="UP000000589">
    <property type="component" value="Chromosome 5"/>
</dbReference>
<dbReference type="RNAct" id="Q9CQM6">
    <property type="molecule type" value="protein"/>
</dbReference>
<dbReference type="Bgee" id="ENSMUSG00000029607">
    <property type="expression patterns" value="Expressed in seminiferous tubule of testis and 39 other cell types or tissues"/>
</dbReference>
<dbReference type="ExpressionAtlas" id="Q9CQM6">
    <property type="expression patterns" value="baseline and differential"/>
</dbReference>
<dbReference type="GO" id="GO:0005654">
    <property type="term" value="C:nucleoplasm"/>
    <property type="evidence" value="ECO:0007669"/>
    <property type="project" value="Ensembl"/>
</dbReference>
<dbReference type="GO" id="GO:0003677">
    <property type="term" value="F:DNA binding"/>
    <property type="evidence" value="ECO:0007669"/>
    <property type="project" value="UniProtKB-KW"/>
</dbReference>
<dbReference type="Gene3D" id="1.25.40.20">
    <property type="entry name" value="Ankyrin repeat-containing domain"/>
    <property type="match status" value="3"/>
</dbReference>
<dbReference type="InterPro" id="IPR002110">
    <property type="entry name" value="Ankyrin_rpt"/>
</dbReference>
<dbReference type="InterPro" id="IPR036770">
    <property type="entry name" value="Ankyrin_rpt-contain_sf"/>
</dbReference>
<dbReference type="PANTHER" id="PTHR24197">
    <property type="entry name" value="ANKYRIN REPEAT DOMAIN-CONTAINING PROTEIN 61"/>
    <property type="match status" value="1"/>
</dbReference>
<dbReference type="PANTHER" id="PTHR24197:SF48">
    <property type="entry name" value="ANKYRIN REPEAT DOMAIN-CONTAINING PROTEIN 61"/>
    <property type="match status" value="1"/>
</dbReference>
<dbReference type="Pfam" id="PF00023">
    <property type="entry name" value="Ank"/>
    <property type="match status" value="1"/>
</dbReference>
<dbReference type="Pfam" id="PF12796">
    <property type="entry name" value="Ank_2"/>
    <property type="match status" value="1"/>
</dbReference>
<dbReference type="Pfam" id="PF13637">
    <property type="entry name" value="Ank_4"/>
    <property type="match status" value="1"/>
</dbReference>
<dbReference type="SMART" id="SM00248">
    <property type="entry name" value="ANK"/>
    <property type="match status" value="6"/>
</dbReference>
<dbReference type="SUPFAM" id="SSF48403">
    <property type="entry name" value="Ankyrin repeat"/>
    <property type="match status" value="1"/>
</dbReference>
<dbReference type="PROSITE" id="PS50297">
    <property type="entry name" value="ANK_REP_REGION"/>
    <property type="match status" value="1"/>
</dbReference>
<dbReference type="PROSITE" id="PS50088">
    <property type="entry name" value="ANK_REPEAT"/>
    <property type="match status" value="5"/>
</dbReference>
<comment type="alternative products">
    <event type="alternative splicing"/>
    <isoform>
        <id>Q9CQM6-1</id>
        <name>1</name>
        <sequence type="displayed"/>
    </isoform>
    <isoform>
        <id>Q9CQM6-2</id>
        <name>2</name>
        <sequence type="described" ref="VSP_032775"/>
    </isoform>
</comment>
<feature type="chain" id="PRO_0000328763" description="Ankyrin repeat domain-containing protein 61">
    <location>
        <begin position="1"/>
        <end position="421"/>
    </location>
</feature>
<feature type="repeat" description="ANK 1">
    <location>
        <begin position="27"/>
        <end position="57"/>
    </location>
</feature>
<feature type="repeat" description="ANK 2">
    <location>
        <begin position="74"/>
        <end position="103"/>
    </location>
</feature>
<feature type="repeat" description="ANK 3">
    <location>
        <begin position="107"/>
        <end position="146"/>
    </location>
</feature>
<feature type="repeat" description="ANK 4">
    <location>
        <begin position="166"/>
        <end position="195"/>
    </location>
</feature>
<feature type="repeat" description="ANK 5">
    <location>
        <begin position="199"/>
        <end position="228"/>
    </location>
</feature>
<feature type="repeat" description="ANK 6">
    <location>
        <begin position="233"/>
        <end position="272"/>
    </location>
</feature>
<feature type="repeat" description="ANK 7">
    <location>
        <begin position="276"/>
        <end position="305"/>
    </location>
</feature>
<feature type="repeat" description="ANK 8">
    <location>
        <begin position="309"/>
        <end position="342"/>
    </location>
</feature>
<feature type="splice variant" id="VSP_032775" description="In isoform 2." evidence="1">
    <original>MGNITKRGSRDLVADGATLVEESLATTLHSKLYEAIIKEDCNTIKTLLRNHPVNQPLTILANSTRYRLLSQ</original>
    <variation>MDGWNTACVAGRRVPSSSQNTPTATMSCK</variation>
    <location>
        <begin position="1"/>
        <end position="71"/>
    </location>
</feature>
<keyword id="KW-0025">Alternative splicing</keyword>
<keyword id="KW-0040">ANK repeat</keyword>
<keyword id="KW-0238">DNA-binding</keyword>
<keyword id="KW-1185">Reference proteome</keyword>
<keyword id="KW-0677">Repeat</keyword>
<reference key="1">
    <citation type="journal article" date="2005" name="Science">
        <title>The transcriptional landscape of the mammalian genome.</title>
        <authorList>
            <person name="Carninci P."/>
            <person name="Kasukawa T."/>
            <person name="Katayama S."/>
            <person name="Gough J."/>
            <person name="Frith M.C."/>
            <person name="Maeda N."/>
            <person name="Oyama R."/>
            <person name="Ravasi T."/>
            <person name="Lenhard B."/>
            <person name="Wells C."/>
            <person name="Kodzius R."/>
            <person name="Shimokawa K."/>
            <person name="Bajic V.B."/>
            <person name="Brenner S.E."/>
            <person name="Batalov S."/>
            <person name="Forrest A.R."/>
            <person name="Zavolan M."/>
            <person name="Davis M.J."/>
            <person name="Wilming L.G."/>
            <person name="Aidinis V."/>
            <person name="Allen J.E."/>
            <person name="Ambesi-Impiombato A."/>
            <person name="Apweiler R."/>
            <person name="Aturaliya R.N."/>
            <person name="Bailey T.L."/>
            <person name="Bansal M."/>
            <person name="Baxter L."/>
            <person name="Beisel K.W."/>
            <person name="Bersano T."/>
            <person name="Bono H."/>
            <person name="Chalk A.M."/>
            <person name="Chiu K.P."/>
            <person name="Choudhary V."/>
            <person name="Christoffels A."/>
            <person name="Clutterbuck D.R."/>
            <person name="Crowe M.L."/>
            <person name="Dalla E."/>
            <person name="Dalrymple B.P."/>
            <person name="de Bono B."/>
            <person name="Della Gatta G."/>
            <person name="di Bernardo D."/>
            <person name="Down T."/>
            <person name="Engstrom P."/>
            <person name="Fagiolini M."/>
            <person name="Faulkner G."/>
            <person name="Fletcher C.F."/>
            <person name="Fukushima T."/>
            <person name="Furuno M."/>
            <person name="Futaki S."/>
            <person name="Gariboldi M."/>
            <person name="Georgii-Hemming P."/>
            <person name="Gingeras T.R."/>
            <person name="Gojobori T."/>
            <person name="Green R.E."/>
            <person name="Gustincich S."/>
            <person name="Harbers M."/>
            <person name="Hayashi Y."/>
            <person name="Hensch T.K."/>
            <person name="Hirokawa N."/>
            <person name="Hill D."/>
            <person name="Huminiecki L."/>
            <person name="Iacono M."/>
            <person name="Ikeo K."/>
            <person name="Iwama A."/>
            <person name="Ishikawa T."/>
            <person name="Jakt M."/>
            <person name="Kanapin A."/>
            <person name="Katoh M."/>
            <person name="Kawasawa Y."/>
            <person name="Kelso J."/>
            <person name="Kitamura H."/>
            <person name="Kitano H."/>
            <person name="Kollias G."/>
            <person name="Krishnan S.P."/>
            <person name="Kruger A."/>
            <person name="Kummerfeld S.K."/>
            <person name="Kurochkin I.V."/>
            <person name="Lareau L.F."/>
            <person name="Lazarevic D."/>
            <person name="Lipovich L."/>
            <person name="Liu J."/>
            <person name="Liuni S."/>
            <person name="McWilliam S."/>
            <person name="Madan Babu M."/>
            <person name="Madera M."/>
            <person name="Marchionni L."/>
            <person name="Matsuda H."/>
            <person name="Matsuzawa S."/>
            <person name="Miki H."/>
            <person name="Mignone F."/>
            <person name="Miyake S."/>
            <person name="Morris K."/>
            <person name="Mottagui-Tabar S."/>
            <person name="Mulder N."/>
            <person name="Nakano N."/>
            <person name="Nakauchi H."/>
            <person name="Ng P."/>
            <person name="Nilsson R."/>
            <person name="Nishiguchi S."/>
            <person name="Nishikawa S."/>
            <person name="Nori F."/>
            <person name="Ohara O."/>
            <person name="Okazaki Y."/>
            <person name="Orlando V."/>
            <person name="Pang K.C."/>
            <person name="Pavan W.J."/>
            <person name="Pavesi G."/>
            <person name="Pesole G."/>
            <person name="Petrovsky N."/>
            <person name="Piazza S."/>
            <person name="Reed J."/>
            <person name="Reid J.F."/>
            <person name="Ring B.Z."/>
            <person name="Ringwald M."/>
            <person name="Rost B."/>
            <person name="Ruan Y."/>
            <person name="Salzberg S.L."/>
            <person name="Sandelin A."/>
            <person name="Schneider C."/>
            <person name="Schoenbach C."/>
            <person name="Sekiguchi K."/>
            <person name="Semple C.A."/>
            <person name="Seno S."/>
            <person name="Sessa L."/>
            <person name="Sheng Y."/>
            <person name="Shibata Y."/>
            <person name="Shimada H."/>
            <person name="Shimada K."/>
            <person name="Silva D."/>
            <person name="Sinclair B."/>
            <person name="Sperling S."/>
            <person name="Stupka E."/>
            <person name="Sugiura K."/>
            <person name="Sultana R."/>
            <person name="Takenaka Y."/>
            <person name="Taki K."/>
            <person name="Tammoja K."/>
            <person name="Tan S.L."/>
            <person name="Tang S."/>
            <person name="Taylor M.S."/>
            <person name="Tegner J."/>
            <person name="Teichmann S.A."/>
            <person name="Ueda H.R."/>
            <person name="van Nimwegen E."/>
            <person name="Verardo R."/>
            <person name="Wei C.L."/>
            <person name="Yagi K."/>
            <person name="Yamanishi H."/>
            <person name="Zabarovsky E."/>
            <person name="Zhu S."/>
            <person name="Zimmer A."/>
            <person name="Hide W."/>
            <person name="Bult C."/>
            <person name="Grimmond S.M."/>
            <person name="Teasdale R.D."/>
            <person name="Liu E.T."/>
            <person name="Brusic V."/>
            <person name="Quackenbush J."/>
            <person name="Wahlestedt C."/>
            <person name="Mattick J.S."/>
            <person name="Hume D.A."/>
            <person name="Kai C."/>
            <person name="Sasaki D."/>
            <person name="Tomaru Y."/>
            <person name="Fukuda S."/>
            <person name="Kanamori-Katayama M."/>
            <person name="Suzuki M."/>
            <person name="Aoki J."/>
            <person name="Arakawa T."/>
            <person name="Iida J."/>
            <person name="Imamura K."/>
            <person name="Itoh M."/>
            <person name="Kato T."/>
            <person name="Kawaji H."/>
            <person name="Kawagashira N."/>
            <person name="Kawashima T."/>
            <person name="Kojima M."/>
            <person name="Kondo S."/>
            <person name="Konno H."/>
            <person name="Nakano K."/>
            <person name="Ninomiya N."/>
            <person name="Nishio T."/>
            <person name="Okada M."/>
            <person name="Plessy C."/>
            <person name="Shibata K."/>
            <person name="Shiraki T."/>
            <person name="Suzuki S."/>
            <person name="Tagami M."/>
            <person name="Waki K."/>
            <person name="Watahiki A."/>
            <person name="Okamura-Oho Y."/>
            <person name="Suzuki H."/>
            <person name="Kawai J."/>
            <person name="Hayashizaki Y."/>
        </authorList>
    </citation>
    <scope>NUCLEOTIDE SEQUENCE [LARGE SCALE MRNA] (ISOFORM 1)</scope>
    <source>
        <strain>C57BL/6J</strain>
        <tissue>Testis</tissue>
    </source>
</reference>
<reference key="2">
    <citation type="journal article" date="2004" name="Genome Res.">
        <title>The status, quality, and expansion of the NIH full-length cDNA project: the Mammalian Gene Collection (MGC).</title>
        <authorList>
            <consortium name="The MGC Project Team"/>
        </authorList>
    </citation>
    <scope>NUCLEOTIDE SEQUENCE [LARGE SCALE MRNA] (ISOFORM 2)</scope>
    <source>
        <tissue>Testis</tissue>
    </source>
</reference>
<protein>
    <recommendedName>
        <fullName>Ankyrin repeat domain-containing protein 61</fullName>
    </recommendedName>
</protein>
<organism>
    <name type="scientific">Mus musculus</name>
    <name type="common">Mouse</name>
    <dbReference type="NCBI Taxonomy" id="10090"/>
    <lineage>
        <taxon>Eukaryota</taxon>
        <taxon>Metazoa</taxon>
        <taxon>Chordata</taxon>
        <taxon>Craniata</taxon>
        <taxon>Vertebrata</taxon>
        <taxon>Euteleostomi</taxon>
        <taxon>Mammalia</taxon>
        <taxon>Eutheria</taxon>
        <taxon>Euarchontoglires</taxon>
        <taxon>Glires</taxon>
        <taxon>Rodentia</taxon>
        <taxon>Myomorpha</taxon>
        <taxon>Muroidea</taxon>
        <taxon>Muridae</taxon>
        <taxon>Murinae</taxon>
        <taxon>Mus</taxon>
        <taxon>Mus</taxon>
    </lineage>
</organism>
<gene>
    <name type="primary">Ankrd61</name>
</gene>
<evidence type="ECO:0000303" key="1">
    <source>
    </source>
</evidence>
<proteinExistence type="evidence at transcript level"/>